<proteinExistence type="inferred from homology"/>
<gene>
    <name evidence="1" type="primary">rpmG</name>
    <name type="ordered locus">A1S_0447</name>
</gene>
<reference key="1">
    <citation type="journal article" date="2007" name="Genes Dev.">
        <title>New insights into Acinetobacter baumannii pathogenesis revealed by high-density pyrosequencing and transposon mutagenesis.</title>
        <authorList>
            <person name="Smith M.G."/>
            <person name="Gianoulis T.A."/>
            <person name="Pukatzki S."/>
            <person name="Mekalanos J.J."/>
            <person name="Ornston L.N."/>
            <person name="Gerstein M."/>
            <person name="Snyder M."/>
        </authorList>
    </citation>
    <scope>NUCLEOTIDE SEQUENCE [LARGE SCALE GENOMIC DNA]</scope>
    <source>
        <strain>ATCC 17978 / DSM 105126 / CIP 53.77 / LMG 1025 / NCDC KC755 / 5377</strain>
    </source>
</reference>
<accession>A3M1V8</accession>
<evidence type="ECO:0000255" key="1">
    <source>
        <dbReference type="HAMAP-Rule" id="MF_00294"/>
    </source>
</evidence>
<evidence type="ECO:0000305" key="2"/>
<dbReference type="EMBL" id="CP000521">
    <property type="protein sequence ID" value="ABO10902.1"/>
    <property type="molecule type" value="Genomic_DNA"/>
</dbReference>
<dbReference type="RefSeq" id="WP_001205031.1">
    <property type="nucleotide sequence ID" value="NZ_CP053098.1"/>
</dbReference>
<dbReference type="SMR" id="A3M1V8"/>
<dbReference type="GeneID" id="97427282"/>
<dbReference type="KEGG" id="acb:A1S_0447"/>
<dbReference type="HOGENOM" id="CLU_190949_1_1_6"/>
<dbReference type="GO" id="GO:0022625">
    <property type="term" value="C:cytosolic large ribosomal subunit"/>
    <property type="evidence" value="ECO:0007669"/>
    <property type="project" value="TreeGrafter"/>
</dbReference>
<dbReference type="GO" id="GO:0003735">
    <property type="term" value="F:structural constituent of ribosome"/>
    <property type="evidence" value="ECO:0007669"/>
    <property type="project" value="InterPro"/>
</dbReference>
<dbReference type="GO" id="GO:0006412">
    <property type="term" value="P:translation"/>
    <property type="evidence" value="ECO:0007669"/>
    <property type="project" value="UniProtKB-UniRule"/>
</dbReference>
<dbReference type="FunFam" id="2.20.28.120:FF:000001">
    <property type="entry name" value="50S ribosomal protein L33"/>
    <property type="match status" value="1"/>
</dbReference>
<dbReference type="Gene3D" id="2.20.28.120">
    <property type="entry name" value="Ribosomal protein L33"/>
    <property type="match status" value="1"/>
</dbReference>
<dbReference type="HAMAP" id="MF_00294">
    <property type="entry name" value="Ribosomal_bL33"/>
    <property type="match status" value="1"/>
</dbReference>
<dbReference type="InterPro" id="IPR001705">
    <property type="entry name" value="Ribosomal_bL33"/>
</dbReference>
<dbReference type="InterPro" id="IPR018264">
    <property type="entry name" value="Ribosomal_bL33_CS"/>
</dbReference>
<dbReference type="InterPro" id="IPR038584">
    <property type="entry name" value="Ribosomal_bL33_sf"/>
</dbReference>
<dbReference type="InterPro" id="IPR011332">
    <property type="entry name" value="Ribosomal_zn-bd"/>
</dbReference>
<dbReference type="NCBIfam" id="NF001860">
    <property type="entry name" value="PRK00595.1"/>
    <property type="match status" value="1"/>
</dbReference>
<dbReference type="NCBIfam" id="TIGR01023">
    <property type="entry name" value="rpmG_bact"/>
    <property type="match status" value="1"/>
</dbReference>
<dbReference type="PANTHER" id="PTHR15238">
    <property type="entry name" value="54S RIBOSOMAL PROTEIN L39, MITOCHONDRIAL"/>
    <property type="match status" value="1"/>
</dbReference>
<dbReference type="PANTHER" id="PTHR15238:SF1">
    <property type="entry name" value="LARGE RIBOSOMAL SUBUNIT PROTEIN BL33M"/>
    <property type="match status" value="1"/>
</dbReference>
<dbReference type="Pfam" id="PF00471">
    <property type="entry name" value="Ribosomal_L33"/>
    <property type="match status" value="1"/>
</dbReference>
<dbReference type="SUPFAM" id="SSF57829">
    <property type="entry name" value="Zn-binding ribosomal proteins"/>
    <property type="match status" value="1"/>
</dbReference>
<dbReference type="PROSITE" id="PS00582">
    <property type="entry name" value="RIBOSOMAL_L33"/>
    <property type="match status" value="1"/>
</dbReference>
<feature type="chain" id="PRO_0000356362" description="Large ribosomal subunit protein bL33">
    <location>
        <begin position="1"/>
        <end position="51"/>
    </location>
</feature>
<comment type="similarity">
    <text evidence="1">Belongs to the bacterial ribosomal protein bL33 family.</text>
</comment>
<sequence length="51" mass="6090">MRDKIRLVSSAGTGYFYTTTKNKRTMPEKMEIKKFDPKIRQHVIFKEAKIK</sequence>
<keyword id="KW-0687">Ribonucleoprotein</keyword>
<keyword id="KW-0689">Ribosomal protein</keyword>
<name>RL33_ACIBT</name>
<protein>
    <recommendedName>
        <fullName evidence="1">Large ribosomal subunit protein bL33</fullName>
    </recommendedName>
    <alternativeName>
        <fullName evidence="2">50S ribosomal protein L33</fullName>
    </alternativeName>
</protein>
<organism>
    <name type="scientific">Acinetobacter baumannii (strain ATCC 17978 / DSM 105126 / CIP 53.77 / LMG 1025 / NCDC KC755 / 5377)</name>
    <dbReference type="NCBI Taxonomy" id="400667"/>
    <lineage>
        <taxon>Bacteria</taxon>
        <taxon>Pseudomonadati</taxon>
        <taxon>Pseudomonadota</taxon>
        <taxon>Gammaproteobacteria</taxon>
        <taxon>Moraxellales</taxon>
        <taxon>Moraxellaceae</taxon>
        <taxon>Acinetobacter</taxon>
        <taxon>Acinetobacter calcoaceticus/baumannii complex</taxon>
    </lineage>
</organism>